<protein>
    <recommendedName>
        <fullName evidence="1">Ribosomal RNA large subunit methyltransferase H 1</fullName>
        <ecNumber evidence="1">2.1.1.177</ecNumber>
    </recommendedName>
    <alternativeName>
        <fullName evidence="1">23S rRNA (pseudouridine1915-N3)-methyltransferase 1</fullName>
    </alternativeName>
    <alternativeName>
        <fullName evidence="1">23S rRNA m3Psi1915 methyltransferase 1</fullName>
    </alternativeName>
    <alternativeName>
        <fullName evidence="1">rRNA (pseudouridine-N3-)-methyltransferase RlmH 1</fullName>
    </alternativeName>
</protein>
<name>RLMH1_CLOPS</name>
<organism>
    <name type="scientific">Clostridium perfringens (strain SM101 / Type A)</name>
    <dbReference type="NCBI Taxonomy" id="289380"/>
    <lineage>
        <taxon>Bacteria</taxon>
        <taxon>Bacillati</taxon>
        <taxon>Bacillota</taxon>
        <taxon>Clostridia</taxon>
        <taxon>Eubacteriales</taxon>
        <taxon>Clostridiaceae</taxon>
        <taxon>Clostridium</taxon>
    </lineage>
</organism>
<feature type="chain" id="PRO_0000260547" description="Ribosomal RNA large subunit methyltransferase H 1">
    <location>
        <begin position="1"/>
        <end position="159"/>
    </location>
</feature>
<feature type="binding site" evidence="1">
    <location>
        <position position="108"/>
    </location>
    <ligand>
        <name>S-adenosyl-L-methionine</name>
        <dbReference type="ChEBI" id="CHEBI:59789"/>
    </ligand>
</feature>
<feature type="binding site" evidence="1">
    <location>
        <begin position="127"/>
        <end position="132"/>
    </location>
    <ligand>
        <name>S-adenosyl-L-methionine</name>
        <dbReference type="ChEBI" id="CHEBI:59789"/>
    </ligand>
</feature>
<keyword id="KW-0963">Cytoplasm</keyword>
<keyword id="KW-0489">Methyltransferase</keyword>
<keyword id="KW-0698">rRNA processing</keyword>
<keyword id="KW-0949">S-adenosyl-L-methionine</keyword>
<keyword id="KW-0808">Transferase</keyword>
<dbReference type="EC" id="2.1.1.177" evidence="1"/>
<dbReference type="EMBL" id="CP000312">
    <property type="protein sequence ID" value="ABG86881.1"/>
    <property type="molecule type" value="Genomic_DNA"/>
</dbReference>
<dbReference type="SMR" id="Q0SPV0"/>
<dbReference type="KEGG" id="cpr:CPR_2610"/>
<dbReference type="Proteomes" id="UP000001824">
    <property type="component" value="Chromosome"/>
</dbReference>
<dbReference type="GO" id="GO:0005737">
    <property type="term" value="C:cytoplasm"/>
    <property type="evidence" value="ECO:0007669"/>
    <property type="project" value="UniProtKB-SubCell"/>
</dbReference>
<dbReference type="GO" id="GO:0070038">
    <property type="term" value="F:rRNA (pseudouridine-N3-)-methyltransferase activity"/>
    <property type="evidence" value="ECO:0007669"/>
    <property type="project" value="UniProtKB-UniRule"/>
</dbReference>
<dbReference type="CDD" id="cd18081">
    <property type="entry name" value="RlmH-like"/>
    <property type="match status" value="1"/>
</dbReference>
<dbReference type="Gene3D" id="3.40.1280.10">
    <property type="match status" value="1"/>
</dbReference>
<dbReference type="HAMAP" id="MF_00658">
    <property type="entry name" value="23SrRNA_methyltr_H"/>
    <property type="match status" value="1"/>
</dbReference>
<dbReference type="InterPro" id="IPR029028">
    <property type="entry name" value="Alpha/beta_knot_MTases"/>
</dbReference>
<dbReference type="InterPro" id="IPR003742">
    <property type="entry name" value="RlmH-like"/>
</dbReference>
<dbReference type="InterPro" id="IPR029026">
    <property type="entry name" value="tRNA_m1G_MTases_N"/>
</dbReference>
<dbReference type="NCBIfam" id="NF000985">
    <property type="entry name" value="PRK00103.1-3"/>
    <property type="match status" value="1"/>
</dbReference>
<dbReference type="NCBIfam" id="TIGR00246">
    <property type="entry name" value="tRNA_RlmH_YbeA"/>
    <property type="match status" value="1"/>
</dbReference>
<dbReference type="PANTHER" id="PTHR33603">
    <property type="entry name" value="METHYLTRANSFERASE"/>
    <property type="match status" value="1"/>
</dbReference>
<dbReference type="PANTHER" id="PTHR33603:SF1">
    <property type="entry name" value="RIBOSOMAL RNA LARGE SUBUNIT METHYLTRANSFERASE H"/>
    <property type="match status" value="1"/>
</dbReference>
<dbReference type="Pfam" id="PF02590">
    <property type="entry name" value="SPOUT_MTase"/>
    <property type="match status" value="1"/>
</dbReference>
<dbReference type="PIRSF" id="PIRSF004505">
    <property type="entry name" value="MT_bac"/>
    <property type="match status" value="1"/>
</dbReference>
<dbReference type="SUPFAM" id="SSF75217">
    <property type="entry name" value="alpha/beta knot"/>
    <property type="match status" value="1"/>
</dbReference>
<gene>
    <name evidence="1" type="primary">rlmH1</name>
    <name type="ordered locus">CPR_2610</name>
</gene>
<reference key="1">
    <citation type="journal article" date="2006" name="Genome Res.">
        <title>Skewed genomic variability in strains of the toxigenic bacterial pathogen, Clostridium perfringens.</title>
        <authorList>
            <person name="Myers G.S.A."/>
            <person name="Rasko D.A."/>
            <person name="Cheung J.K."/>
            <person name="Ravel J."/>
            <person name="Seshadri R."/>
            <person name="DeBoy R.T."/>
            <person name="Ren Q."/>
            <person name="Varga J."/>
            <person name="Awad M.M."/>
            <person name="Brinkac L.M."/>
            <person name="Daugherty S.C."/>
            <person name="Haft D.H."/>
            <person name="Dodson R.J."/>
            <person name="Madupu R."/>
            <person name="Nelson W.C."/>
            <person name="Rosovitz M.J."/>
            <person name="Sullivan S.A."/>
            <person name="Khouri H."/>
            <person name="Dimitrov G.I."/>
            <person name="Watkins K.L."/>
            <person name="Mulligan S."/>
            <person name="Benton J."/>
            <person name="Radune D."/>
            <person name="Fisher D.J."/>
            <person name="Atkins H.S."/>
            <person name="Hiscox T."/>
            <person name="Jost B.H."/>
            <person name="Billington S.J."/>
            <person name="Songer J.G."/>
            <person name="McClane B.A."/>
            <person name="Titball R.W."/>
            <person name="Rood J.I."/>
            <person name="Melville S.B."/>
            <person name="Paulsen I.T."/>
        </authorList>
    </citation>
    <scope>NUCLEOTIDE SEQUENCE [LARGE SCALE GENOMIC DNA]</scope>
    <source>
        <strain>SM101 / Type A</strain>
    </source>
</reference>
<proteinExistence type="inferred from homology"/>
<accession>Q0SPV0</accession>
<sequence length="159" mass="18473">MNITVISVGKLKEKYLKQAIDEYSKRLSRYCKLEIIELPDEKTPDNASEKEELQIKEKEGKLILSKIKDNMHVIAMDLKGNEITSEKFSKYIENCGVMGNSNITFVIGGSLGLSQEVIKRADYKLCFSKMTFPHQLFRVMLLEQVYRAFRIMKNEPYHK</sequence>
<comment type="function">
    <text evidence="1">Specifically methylates the pseudouridine at position 1915 (m3Psi1915) in 23S rRNA.</text>
</comment>
<comment type="catalytic activity">
    <reaction evidence="1">
        <text>pseudouridine(1915) in 23S rRNA + S-adenosyl-L-methionine = N(3)-methylpseudouridine(1915) in 23S rRNA + S-adenosyl-L-homocysteine + H(+)</text>
        <dbReference type="Rhea" id="RHEA:42752"/>
        <dbReference type="Rhea" id="RHEA-COMP:10221"/>
        <dbReference type="Rhea" id="RHEA-COMP:10222"/>
        <dbReference type="ChEBI" id="CHEBI:15378"/>
        <dbReference type="ChEBI" id="CHEBI:57856"/>
        <dbReference type="ChEBI" id="CHEBI:59789"/>
        <dbReference type="ChEBI" id="CHEBI:65314"/>
        <dbReference type="ChEBI" id="CHEBI:74486"/>
        <dbReference type="EC" id="2.1.1.177"/>
    </reaction>
</comment>
<comment type="subunit">
    <text evidence="1">Homodimer.</text>
</comment>
<comment type="subcellular location">
    <subcellularLocation>
        <location evidence="1">Cytoplasm</location>
    </subcellularLocation>
</comment>
<comment type="similarity">
    <text evidence="1">Belongs to the RNA methyltransferase RlmH family.</text>
</comment>
<evidence type="ECO:0000255" key="1">
    <source>
        <dbReference type="HAMAP-Rule" id="MF_00658"/>
    </source>
</evidence>